<comment type="catalytic activity">
    <reaction evidence="1">
        <text>2-(N(omega)-L-arginino)succinate = fumarate + L-arginine</text>
        <dbReference type="Rhea" id="RHEA:24020"/>
        <dbReference type="ChEBI" id="CHEBI:29806"/>
        <dbReference type="ChEBI" id="CHEBI:32682"/>
        <dbReference type="ChEBI" id="CHEBI:57472"/>
        <dbReference type="EC" id="4.3.2.1"/>
    </reaction>
</comment>
<comment type="pathway">
    <text evidence="1">Amino-acid biosynthesis; L-arginine biosynthesis; L-arginine from L-ornithine and carbamoyl phosphate: step 3/3.</text>
</comment>
<comment type="subcellular location">
    <subcellularLocation>
        <location evidence="1">Cytoplasm</location>
    </subcellularLocation>
</comment>
<comment type="similarity">
    <text evidence="1">Belongs to the lyase 1 family. Argininosuccinate lyase subfamily.</text>
</comment>
<name>ARLY_CUPPJ</name>
<evidence type="ECO:0000255" key="1">
    <source>
        <dbReference type="HAMAP-Rule" id="MF_00006"/>
    </source>
</evidence>
<keyword id="KW-0028">Amino-acid biosynthesis</keyword>
<keyword id="KW-0055">Arginine biosynthesis</keyword>
<keyword id="KW-0963">Cytoplasm</keyword>
<keyword id="KW-0456">Lyase</keyword>
<feature type="chain" id="PRO_0000240758" description="Argininosuccinate lyase">
    <location>
        <begin position="1"/>
        <end position="470"/>
    </location>
</feature>
<reference key="1">
    <citation type="journal article" date="2010" name="PLoS ONE">
        <title>The complete multipartite genome sequence of Cupriavidus necator JMP134, a versatile pollutant degrader.</title>
        <authorList>
            <person name="Lykidis A."/>
            <person name="Perez-Pantoja D."/>
            <person name="Ledger T."/>
            <person name="Mavromatis K."/>
            <person name="Anderson I.J."/>
            <person name="Ivanova N.N."/>
            <person name="Hooper S.D."/>
            <person name="Lapidus A."/>
            <person name="Lucas S."/>
            <person name="Gonzalez B."/>
            <person name="Kyrpides N.C."/>
        </authorList>
    </citation>
    <scope>NUCLEOTIDE SEQUENCE [LARGE SCALE GENOMIC DNA]</scope>
    <source>
        <strain>JMP134 / LMG 1197</strain>
    </source>
</reference>
<sequence>MTTSQLAKKGEAWSARFSEPMSDLVKRYTASVFFDKRLALFDIQGSLAHAAMLAKQGIIAEADRAEIERGMAQIKGEIEAGGFEWKLDLEDVHLNIEARLTALVGDAGKRLHTGRSRNDQVATDIRLWLRSEIDNIIALLGALRGSLLDLADQNADTILPGFTHLQVAQPVTFGHHLLAYVEMFTRDAERMADCRKRVNRLPLGAAALAGTSYPIDREFVAQQLGFDGVCRNSLDAVSDRDFAIEFCAAAALVMTHVSRFSEELVLWMSPRVGFIDIADRFCTGSSIMPQKKNPDVPELARGKTGRVNGHLIGLLTLMKGQPLAYNKDNQEDKEPLFDTVDTVVDTLRIFADMVPGITVKPEAMRAAALQGYATATDLADYLVKKGLPFRDAHEAVAHAVRACDSRNCDLADLTVAELREVSGLGDKSALIGDDVHTVLTLEGSVAARNHIGGTAPDQVRAAIAAARAAL</sequence>
<gene>
    <name evidence="1" type="primary">argH</name>
    <name type="ordered locus">Reut_A0695</name>
</gene>
<protein>
    <recommendedName>
        <fullName evidence="1">Argininosuccinate lyase</fullName>
        <shortName evidence="1">ASAL</shortName>
        <ecNumber evidence="1">4.3.2.1</ecNumber>
    </recommendedName>
    <alternativeName>
        <fullName evidence="1">Arginosuccinase</fullName>
    </alternativeName>
</protein>
<accession>Q474V6</accession>
<proteinExistence type="inferred from homology"/>
<dbReference type="EC" id="4.3.2.1" evidence="1"/>
<dbReference type="EMBL" id="CP000090">
    <property type="protein sequence ID" value="AAZ60077.1"/>
    <property type="molecule type" value="Genomic_DNA"/>
</dbReference>
<dbReference type="SMR" id="Q474V6"/>
<dbReference type="STRING" id="264198.Reut_A0695"/>
<dbReference type="KEGG" id="reu:Reut_A0695"/>
<dbReference type="eggNOG" id="COG0165">
    <property type="taxonomic scope" value="Bacteria"/>
</dbReference>
<dbReference type="HOGENOM" id="CLU_027272_2_3_4"/>
<dbReference type="OrthoDB" id="9769623at2"/>
<dbReference type="UniPathway" id="UPA00068">
    <property type="reaction ID" value="UER00114"/>
</dbReference>
<dbReference type="GO" id="GO:0005829">
    <property type="term" value="C:cytosol"/>
    <property type="evidence" value="ECO:0007669"/>
    <property type="project" value="TreeGrafter"/>
</dbReference>
<dbReference type="GO" id="GO:0004056">
    <property type="term" value="F:argininosuccinate lyase activity"/>
    <property type="evidence" value="ECO:0007669"/>
    <property type="project" value="UniProtKB-UniRule"/>
</dbReference>
<dbReference type="GO" id="GO:0042450">
    <property type="term" value="P:arginine biosynthetic process via ornithine"/>
    <property type="evidence" value="ECO:0007669"/>
    <property type="project" value="InterPro"/>
</dbReference>
<dbReference type="GO" id="GO:0006526">
    <property type="term" value="P:L-arginine biosynthetic process"/>
    <property type="evidence" value="ECO:0007669"/>
    <property type="project" value="UniProtKB-UniRule"/>
</dbReference>
<dbReference type="CDD" id="cd01359">
    <property type="entry name" value="Argininosuccinate_lyase"/>
    <property type="match status" value="1"/>
</dbReference>
<dbReference type="FunFam" id="1.10.275.10:FF:000002">
    <property type="entry name" value="Argininosuccinate lyase"/>
    <property type="match status" value="1"/>
</dbReference>
<dbReference type="FunFam" id="1.10.40.30:FF:000001">
    <property type="entry name" value="Argininosuccinate lyase"/>
    <property type="match status" value="1"/>
</dbReference>
<dbReference type="FunFam" id="1.20.200.10:FF:000015">
    <property type="entry name" value="argininosuccinate lyase isoform X2"/>
    <property type="match status" value="1"/>
</dbReference>
<dbReference type="Gene3D" id="1.10.40.30">
    <property type="entry name" value="Fumarase/aspartase (C-terminal domain)"/>
    <property type="match status" value="1"/>
</dbReference>
<dbReference type="Gene3D" id="1.20.200.10">
    <property type="entry name" value="Fumarase/aspartase (Central domain)"/>
    <property type="match status" value="1"/>
</dbReference>
<dbReference type="Gene3D" id="1.10.275.10">
    <property type="entry name" value="Fumarase/aspartase (N-terminal domain)"/>
    <property type="match status" value="1"/>
</dbReference>
<dbReference type="HAMAP" id="MF_00006">
    <property type="entry name" value="Arg_succ_lyase"/>
    <property type="match status" value="1"/>
</dbReference>
<dbReference type="InterPro" id="IPR029419">
    <property type="entry name" value="Arg_succ_lyase_C"/>
</dbReference>
<dbReference type="InterPro" id="IPR009049">
    <property type="entry name" value="Argininosuccinate_lyase"/>
</dbReference>
<dbReference type="InterPro" id="IPR024083">
    <property type="entry name" value="Fumarase/histidase_N"/>
</dbReference>
<dbReference type="InterPro" id="IPR020557">
    <property type="entry name" value="Fumarate_lyase_CS"/>
</dbReference>
<dbReference type="InterPro" id="IPR000362">
    <property type="entry name" value="Fumarate_lyase_fam"/>
</dbReference>
<dbReference type="InterPro" id="IPR022761">
    <property type="entry name" value="Fumarate_lyase_N"/>
</dbReference>
<dbReference type="InterPro" id="IPR008948">
    <property type="entry name" value="L-Aspartase-like"/>
</dbReference>
<dbReference type="NCBIfam" id="TIGR00838">
    <property type="entry name" value="argH"/>
    <property type="match status" value="1"/>
</dbReference>
<dbReference type="PANTHER" id="PTHR43814">
    <property type="entry name" value="ARGININOSUCCINATE LYASE"/>
    <property type="match status" value="1"/>
</dbReference>
<dbReference type="PANTHER" id="PTHR43814:SF1">
    <property type="entry name" value="ARGININOSUCCINATE LYASE"/>
    <property type="match status" value="1"/>
</dbReference>
<dbReference type="Pfam" id="PF14698">
    <property type="entry name" value="ASL_C2"/>
    <property type="match status" value="1"/>
</dbReference>
<dbReference type="Pfam" id="PF00206">
    <property type="entry name" value="Lyase_1"/>
    <property type="match status" value="1"/>
</dbReference>
<dbReference type="PRINTS" id="PR00145">
    <property type="entry name" value="ARGSUCLYASE"/>
</dbReference>
<dbReference type="PRINTS" id="PR00149">
    <property type="entry name" value="FUMRATELYASE"/>
</dbReference>
<dbReference type="SUPFAM" id="SSF48557">
    <property type="entry name" value="L-aspartase-like"/>
    <property type="match status" value="1"/>
</dbReference>
<dbReference type="PROSITE" id="PS00163">
    <property type="entry name" value="FUMARATE_LYASES"/>
    <property type="match status" value="1"/>
</dbReference>
<organism>
    <name type="scientific">Cupriavidus pinatubonensis (strain JMP 134 / LMG 1197)</name>
    <name type="common">Cupriavidus necator (strain JMP 134)</name>
    <dbReference type="NCBI Taxonomy" id="264198"/>
    <lineage>
        <taxon>Bacteria</taxon>
        <taxon>Pseudomonadati</taxon>
        <taxon>Pseudomonadota</taxon>
        <taxon>Betaproteobacteria</taxon>
        <taxon>Burkholderiales</taxon>
        <taxon>Burkholderiaceae</taxon>
        <taxon>Cupriavidus</taxon>
    </lineage>
</organism>